<protein>
    <recommendedName>
        <fullName evidence="1">Photosystem II reaction center protein I</fullName>
        <shortName evidence="1">PSII-I</shortName>
    </recommendedName>
    <alternativeName>
        <fullName evidence="1">PSII 4.8 kDa protein</fullName>
    </alternativeName>
</protein>
<geneLocation type="chloroplast"/>
<name>PSBI_NICSY</name>
<reference key="1">
    <citation type="journal article" date="2006" name="Mol. Genet. Genomics">
        <title>The chloroplast genome of Nicotiana sylvestris and Nicotiana tomentosiformis: complete sequencing confirms that the Nicotiana sylvestris progenitor is the maternal genome donor of Nicotiana tabacum.</title>
        <authorList>
            <person name="Yukawa M."/>
            <person name="Tsudzuki T."/>
            <person name="Sugiura M."/>
        </authorList>
    </citation>
    <scope>NUCLEOTIDE SEQUENCE [LARGE SCALE GENOMIC DNA]</scope>
</reference>
<proteinExistence type="inferred from homology"/>
<dbReference type="EMBL" id="AB237912">
    <property type="protein sequence ID" value="BAE46630.1"/>
    <property type="molecule type" value="Genomic_DNA"/>
</dbReference>
<dbReference type="RefSeq" id="YP_358655.1">
    <property type="nucleotide sequence ID" value="NC_007500.1"/>
</dbReference>
<dbReference type="SMR" id="Q3C1F9"/>
<dbReference type="GeneID" id="3735108"/>
<dbReference type="KEGG" id="nsy:3735108"/>
<dbReference type="OrthoDB" id="26130at4085"/>
<dbReference type="Proteomes" id="UP000189701">
    <property type="component" value="Chloroplast Pltd"/>
</dbReference>
<dbReference type="GO" id="GO:0009535">
    <property type="term" value="C:chloroplast thylakoid membrane"/>
    <property type="evidence" value="ECO:0007669"/>
    <property type="project" value="UniProtKB-SubCell"/>
</dbReference>
<dbReference type="GO" id="GO:0009539">
    <property type="term" value="C:photosystem II reaction center"/>
    <property type="evidence" value="ECO:0007669"/>
    <property type="project" value="InterPro"/>
</dbReference>
<dbReference type="GO" id="GO:0015979">
    <property type="term" value="P:photosynthesis"/>
    <property type="evidence" value="ECO:0007669"/>
    <property type="project" value="UniProtKB-UniRule"/>
</dbReference>
<dbReference type="HAMAP" id="MF_01316">
    <property type="entry name" value="PSII_PsbI"/>
    <property type="match status" value="1"/>
</dbReference>
<dbReference type="InterPro" id="IPR003686">
    <property type="entry name" value="PSII_PsbI"/>
</dbReference>
<dbReference type="InterPro" id="IPR037271">
    <property type="entry name" value="PSII_PsbI_sf"/>
</dbReference>
<dbReference type="NCBIfam" id="NF002735">
    <property type="entry name" value="PRK02655.1"/>
    <property type="match status" value="1"/>
</dbReference>
<dbReference type="PANTHER" id="PTHR35772">
    <property type="entry name" value="PHOTOSYSTEM II REACTION CENTER PROTEIN I"/>
    <property type="match status" value="1"/>
</dbReference>
<dbReference type="PANTHER" id="PTHR35772:SF1">
    <property type="entry name" value="PHOTOSYSTEM II REACTION CENTER PROTEIN I"/>
    <property type="match status" value="1"/>
</dbReference>
<dbReference type="Pfam" id="PF02532">
    <property type="entry name" value="PsbI"/>
    <property type="match status" value="1"/>
</dbReference>
<dbReference type="SUPFAM" id="SSF161041">
    <property type="entry name" value="Photosystem II reaction center protein I, PsbI"/>
    <property type="match status" value="1"/>
</dbReference>
<comment type="function">
    <text evidence="1">One of the components of the core complex of photosystem II (PSII), required for its stability and/or assembly. PSII is a light-driven water:plastoquinone oxidoreductase that uses light energy to abstract electrons from H(2)O, generating O(2) and a proton gradient subsequently used for ATP formation. It consists of a core antenna complex that captures photons, and an electron transfer chain that converts photonic excitation into a charge separation.</text>
</comment>
<comment type="subunit">
    <text evidence="1">PSII is composed of 1 copy each of membrane proteins PsbA, PsbB, PsbC, PsbD, PsbE, PsbF, PsbH, PsbI, PsbJ, PsbK, PsbL, PsbM, PsbT, PsbX, PsbY, PsbZ, Psb30/Ycf12, at least 3 peripheral proteins of the oxygen-evolving complex and a large number of cofactors. It forms dimeric complexes.</text>
</comment>
<comment type="subcellular location">
    <subcellularLocation>
        <location evidence="1">Plastid</location>
        <location evidence="1">Chloroplast thylakoid membrane</location>
        <topology evidence="1">Single-pass membrane protein</topology>
    </subcellularLocation>
</comment>
<comment type="similarity">
    <text evidence="1">Belongs to the PsbI family.</text>
</comment>
<sequence length="36" mass="4168">MLTLKLFVYTVVIFFVSLFIFGFLSNDPGRNPGREE</sequence>
<keyword id="KW-0150">Chloroplast</keyword>
<keyword id="KW-0472">Membrane</keyword>
<keyword id="KW-0602">Photosynthesis</keyword>
<keyword id="KW-0604">Photosystem II</keyword>
<keyword id="KW-0934">Plastid</keyword>
<keyword id="KW-0674">Reaction center</keyword>
<keyword id="KW-1185">Reference proteome</keyword>
<keyword id="KW-0793">Thylakoid</keyword>
<keyword id="KW-0812">Transmembrane</keyword>
<keyword id="KW-1133">Transmembrane helix</keyword>
<accession>Q3C1F9</accession>
<organism>
    <name type="scientific">Nicotiana sylvestris</name>
    <name type="common">Wood tobacco</name>
    <name type="synonym">South American tobacco</name>
    <dbReference type="NCBI Taxonomy" id="4096"/>
    <lineage>
        <taxon>Eukaryota</taxon>
        <taxon>Viridiplantae</taxon>
        <taxon>Streptophyta</taxon>
        <taxon>Embryophyta</taxon>
        <taxon>Tracheophyta</taxon>
        <taxon>Spermatophyta</taxon>
        <taxon>Magnoliopsida</taxon>
        <taxon>eudicotyledons</taxon>
        <taxon>Gunneridae</taxon>
        <taxon>Pentapetalae</taxon>
        <taxon>asterids</taxon>
        <taxon>lamiids</taxon>
        <taxon>Solanales</taxon>
        <taxon>Solanaceae</taxon>
        <taxon>Nicotianoideae</taxon>
        <taxon>Nicotianeae</taxon>
        <taxon>Nicotiana</taxon>
    </lineage>
</organism>
<evidence type="ECO:0000255" key="1">
    <source>
        <dbReference type="HAMAP-Rule" id="MF_01316"/>
    </source>
</evidence>
<feature type="chain" id="PRO_0000275799" description="Photosystem II reaction center protein I">
    <location>
        <begin position="1"/>
        <end position="36"/>
    </location>
</feature>
<feature type="transmembrane region" description="Helical" evidence="1">
    <location>
        <begin position="4"/>
        <end position="24"/>
    </location>
</feature>
<gene>
    <name evidence="1" type="primary">psbI</name>
</gene>